<geneLocation type="chloroplast"/>
<comment type="function">
    <text evidence="1">NDH shuttles electrons from NAD(P)H:plastoquinone, via FMN and iron-sulfur (Fe-S) centers, to quinones in the photosynthetic chain and possibly in a chloroplast respiratory chain. The immediate electron acceptor for the enzyme in this species is believed to be plastoquinone. Couples the redox reaction to proton translocation, and thus conserves the redox energy in a proton gradient.</text>
</comment>
<comment type="catalytic activity">
    <reaction evidence="1">
        <text>a plastoquinone + NADH + (n+1) H(+)(in) = a plastoquinol + NAD(+) + n H(+)(out)</text>
        <dbReference type="Rhea" id="RHEA:42608"/>
        <dbReference type="Rhea" id="RHEA-COMP:9561"/>
        <dbReference type="Rhea" id="RHEA-COMP:9562"/>
        <dbReference type="ChEBI" id="CHEBI:15378"/>
        <dbReference type="ChEBI" id="CHEBI:17757"/>
        <dbReference type="ChEBI" id="CHEBI:57540"/>
        <dbReference type="ChEBI" id="CHEBI:57945"/>
        <dbReference type="ChEBI" id="CHEBI:62192"/>
    </reaction>
</comment>
<comment type="catalytic activity">
    <reaction evidence="1">
        <text>a plastoquinone + NADPH + (n+1) H(+)(in) = a plastoquinol + NADP(+) + n H(+)(out)</text>
        <dbReference type="Rhea" id="RHEA:42612"/>
        <dbReference type="Rhea" id="RHEA-COMP:9561"/>
        <dbReference type="Rhea" id="RHEA-COMP:9562"/>
        <dbReference type="ChEBI" id="CHEBI:15378"/>
        <dbReference type="ChEBI" id="CHEBI:17757"/>
        <dbReference type="ChEBI" id="CHEBI:57783"/>
        <dbReference type="ChEBI" id="CHEBI:58349"/>
        <dbReference type="ChEBI" id="CHEBI:62192"/>
    </reaction>
</comment>
<comment type="subunit">
    <text evidence="1">NDH is composed of at least 16 different subunits, 5 of which are encoded in the nucleus.</text>
</comment>
<comment type="subcellular location">
    <subcellularLocation>
        <location evidence="1">Plastid</location>
        <location evidence="1">Chloroplast thylakoid membrane</location>
        <topology evidence="1">Multi-pass membrane protein</topology>
    </subcellularLocation>
</comment>
<comment type="similarity">
    <text evidence="1">Belongs to the complex I subunit 1 family.</text>
</comment>
<gene>
    <name evidence="1" type="primary">ndhA</name>
</gene>
<sequence>MIIDTTKVQQAINSFSRSESLKEVYGLIWLLVPIFTPLLGIIIGVLVIVWLERQISAGVQQRIGPEYAGPLGILQALADGTKLLFKEDLLPSRGDILLFSLGPSIAVISILLSYSVIPFGYHLVLADLSIGVFLWIAISSIAPIGLLMSGYGSNNKYSFLGGLRAAAQSISYEIPLTPCVLSISLLSNSSSTVDIVEAQSKYGFWGWNLWRQPIGFMVFLISSLAECERLPFDLPEAEEELVAGYQTEYSGIKFGLFYVASYLNLLVSSLFVTVLYLGGWNLSIPYIFIFIPELFRINEVCGIFGMTIGIFITLAKAYLFLFISITTRWTLPRMRMDQLLNLGWKFLLPISLGNLLLTTSFQLLSL</sequence>
<evidence type="ECO:0000255" key="1">
    <source>
        <dbReference type="HAMAP-Rule" id="MF_01350"/>
    </source>
</evidence>
<feature type="chain" id="PRO_0000298874" description="NAD(P)H-quinone oxidoreductase subunit 1, chloroplastic">
    <location>
        <begin position="1"/>
        <end position="366"/>
    </location>
</feature>
<feature type="transmembrane region" description="Helical" evidence="1">
    <location>
        <begin position="28"/>
        <end position="48"/>
    </location>
</feature>
<feature type="transmembrane region" description="Helical" evidence="1">
    <location>
        <begin position="105"/>
        <end position="125"/>
    </location>
</feature>
<feature type="transmembrane region" description="Helical" evidence="1">
    <location>
        <begin position="128"/>
        <end position="148"/>
    </location>
</feature>
<feature type="transmembrane region" description="Helical" evidence="1">
    <location>
        <begin position="250"/>
        <end position="270"/>
    </location>
</feature>
<feature type="transmembrane region" description="Helical" evidence="1">
    <location>
        <begin position="271"/>
        <end position="291"/>
    </location>
</feature>
<feature type="transmembrane region" description="Helical" evidence="1">
    <location>
        <begin position="303"/>
        <end position="323"/>
    </location>
</feature>
<feature type="transmembrane region" description="Helical" evidence="1">
    <location>
        <begin position="346"/>
        <end position="366"/>
    </location>
</feature>
<accession>Q09FQ5</accession>
<organism>
    <name type="scientific">Nandina domestica</name>
    <name type="common">Heavenly bamboo</name>
    <dbReference type="NCBI Taxonomy" id="41776"/>
    <lineage>
        <taxon>Eukaryota</taxon>
        <taxon>Viridiplantae</taxon>
        <taxon>Streptophyta</taxon>
        <taxon>Embryophyta</taxon>
        <taxon>Tracheophyta</taxon>
        <taxon>Spermatophyta</taxon>
        <taxon>Magnoliopsida</taxon>
        <taxon>Ranunculales</taxon>
        <taxon>Berberidaceae</taxon>
        <taxon>Nandinoideae</taxon>
        <taxon>Nandineae</taxon>
        <taxon>Nandina</taxon>
    </lineage>
</organism>
<dbReference type="EC" id="7.1.1.-" evidence="1"/>
<dbReference type="EMBL" id="DQ923117">
    <property type="protein sequence ID" value="ABI49920.1"/>
    <property type="molecule type" value="Genomic_DNA"/>
</dbReference>
<dbReference type="RefSeq" id="YP_740706.1">
    <property type="nucleotide sequence ID" value="NC_008336.1"/>
</dbReference>
<dbReference type="SMR" id="Q09FQ5"/>
<dbReference type="GeneID" id="4271654"/>
<dbReference type="GO" id="GO:0009535">
    <property type="term" value="C:chloroplast thylakoid membrane"/>
    <property type="evidence" value="ECO:0007669"/>
    <property type="project" value="UniProtKB-SubCell"/>
</dbReference>
<dbReference type="GO" id="GO:0003954">
    <property type="term" value="F:NADH dehydrogenase activity"/>
    <property type="evidence" value="ECO:0007669"/>
    <property type="project" value="TreeGrafter"/>
</dbReference>
<dbReference type="GO" id="GO:0016655">
    <property type="term" value="F:oxidoreductase activity, acting on NAD(P)H, quinone or similar compound as acceptor"/>
    <property type="evidence" value="ECO:0007669"/>
    <property type="project" value="UniProtKB-UniRule"/>
</dbReference>
<dbReference type="GO" id="GO:0048038">
    <property type="term" value="F:quinone binding"/>
    <property type="evidence" value="ECO:0007669"/>
    <property type="project" value="UniProtKB-KW"/>
</dbReference>
<dbReference type="GO" id="GO:0009060">
    <property type="term" value="P:aerobic respiration"/>
    <property type="evidence" value="ECO:0007669"/>
    <property type="project" value="TreeGrafter"/>
</dbReference>
<dbReference type="GO" id="GO:0019684">
    <property type="term" value="P:photosynthesis, light reaction"/>
    <property type="evidence" value="ECO:0007669"/>
    <property type="project" value="UniProtKB-UniRule"/>
</dbReference>
<dbReference type="HAMAP" id="MF_01350">
    <property type="entry name" value="NDH1_NuoH"/>
    <property type="match status" value="1"/>
</dbReference>
<dbReference type="InterPro" id="IPR001694">
    <property type="entry name" value="NADH_UbQ_OxRdtase_su1/FPO"/>
</dbReference>
<dbReference type="InterPro" id="IPR018086">
    <property type="entry name" value="NADH_UbQ_OxRdtase_su1_CS"/>
</dbReference>
<dbReference type="NCBIfam" id="NF004741">
    <property type="entry name" value="PRK06076.1-2"/>
    <property type="match status" value="1"/>
</dbReference>
<dbReference type="PANTHER" id="PTHR11432">
    <property type="entry name" value="NADH DEHYDROGENASE SUBUNIT 1"/>
    <property type="match status" value="1"/>
</dbReference>
<dbReference type="PANTHER" id="PTHR11432:SF3">
    <property type="entry name" value="NADH-UBIQUINONE OXIDOREDUCTASE CHAIN 1"/>
    <property type="match status" value="1"/>
</dbReference>
<dbReference type="Pfam" id="PF00146">
    <property type="entry name" value="NADHdh"/>
    <property type="match status" value="1"/>
</dbReference>
<dbReference type="PROSITE" id="PS00667">
    <property type="entry name" value="COMPLEX1_ND1_1"/>
    <property type="match status" value="1"/>
</dbReference>
<dbReference type="PROSITE" id="PS00668">
    <property type="entry name" value="COMPLEX1_ND1_2"/>
    <property type="match status" value="1"/>
</dbReference>
<protein>
    <recommendedName>
        <fullName evidence="1">NAD(P)H-quinone oxidoreductase subunit 1, chloroplastic</fullName>
        <ecNumber evidence="1">7.1.1.-</ecNumber>
    </recommendedName>
    <alternativeName>
        <fullName evidence="1">NAD(P)H dehydrogenase subunit 1</fullName>
        <shortName evidence="1">NDH subunit 1</shortName>
    </alternativeName>
    <alternativeName>
        <fullName evidence="1">NADH-plastoquinone oxidoreductase subunit 1</fullName>
    </alternativeName>
</protein>
<proteinExistence type="inferred from homology"/>
<keyword id="KW-0150">Chloroplast</keyword>
<keyword id="KW-0472">Membrane</keyword>
<keyword id="KW-0520">NAD</keyword>
<keyword id="KW-0521">NADP</keyword>
<keyword id="KW-0934">Plastid</keyword>
<keyword id="KW-0618">Plastoquinone</keyword>
<keyword id="KW-0874">Quinone</keyword>
<keyword id="KW-0793">Thylakoid</keyword>
<keyword id="KW-1278">Translocase</keyword>
<keyword id="KW-0812">Transmembrane</keyword>
<keyword id="KW-1133">Transmembrane helix</keyword>
<reference key="1">
    <citation type="journal article" date="2006" name="BMC Plant Biol.">
        <title>Rapid and accurate pyrosequencing of angiosperm plastid genomes.</title>
        <authorList>
            <person name="Moore M.J."/>
            <person name="Dhingra A."/>
            <person name="Soltis P.S."/>
            <person name="Shaw R."/>
            <person name="Farmerie W.G."/>
            <person name="Folta K.M."/>
            <person name="Soltis D.E."/>
        </authorList>
    </citation>
    <scope>NUCLEOTIDE SEQUENCE [LARGE SCALE GENOMIC DNA]</scope>
</reference>
<name>NU1C_NANDO</name>